<comment type="function">
    <text>Ferredoxins are iron-sulfur proteins that transfer electrons in a wide variety of metabolic reactions.</text>
</comment>
<comment type="cofactor">
    <cofactor>
        <name>[2Fe-2S] cluster</name>
        <dbReference type="ChEBI" id="CHEBI:190135"/>
    </cofactor>
    <text>Binds 1 [2Fe-2S] cluster.</text>
</comment>
<comment type="subcellular location">
    <subcellularLocation>
        <location>Plastid</location>
        <location>Chloroplast</location>
    </subcellularLocation>
</comment>
<comment type="miscellaneous">
    <text>In radish there are 4 ferredoxins: 2 are root-specific (R-B1 and R-B2), one is present in both leaves and roots (L-A), and there is a minor form which is leaf specific (L-B).</text>
</comment>
<comment type="similarity">
    <text evidence="2">Belongs to the 2Fe2S plant-type ferredoxin family.</text>
</comment>
<name>FER3_RAPSA</name>
<reference key="1">
    <citation type="journal article" date="1989" name="J. Biochem.">
        <title>Amino acid sequences of ferredoxin isoproteins from radish roots.</title>
        <authorList>
            <person name="Wada K."/>
            <person name="Onda M."/>
            <person name="Matsubara H."/>
        </authorList>
    </citation>
    <scope>PROTEIN SEQUENCE</scope>
    <source>
        <strain>cv. Acantiformis Miyashige</strain>
        <tissue>Leaf</tissue>
    </source>
</reference>
<feature type="chain" id="PRO_0000189360" description="Ferredoxin, leaf L-A">
    <location>
        <begin position="1"/>
        <end position="96"/>
    </location>
</feature>
<feature type="domain" description="2Fe-2S ferredoxin-type" evidence="1">
    <location>
        <begin position="3"/>
        <end position="93"/>
    </location>
</feature>
<feature type="binding site" evidence="1">
    <location>
        <position position="39"/>
    </location>
    <ligand>
        <name>[2Fe-2S] cluster</name>
        <dbReference type="ChEBI" id="CHEBI:190135"/>
    </ligand>
</feature>
<feature type="binding site" evidence="1">
    <location>
        <position position="44"/>
    </location>
    <ligand>
        <name>[2Fe-2S] cluster</name>
        <dbReference type="ChEBI" id="CHEBI:190135"/>
    </ligand>
</feature>
<feature type="binding site" evidence="1">
    <location>
        <position position="47"/>
    </location>
    <ligand>
        <name>[2Fe-2S] cluster</name>
        <dbReference type="ChEBI" id="CHEBI:190135"/>
    </ligand>
</feature>
<feature type="binding site" evidence="1">
    <location>
        <position position="77"/>
    </location>
    <ligand>
        <name>[2Fe-2S] cluster</name>
        <dbReference type="ChEBI" id="CHEBI:190135"/>
    </ligand>
</feature>
<feature type="sequence variant">
    <original>I</original>
    <variation>V</variation>
    <location>
        <position position="8"/>
    </location>
</feature>
<feature type="sequence variant">
    <original>S</original>
    <variation>T</variation>
    <location>
        <position position="55"/>
    </location>
</feature>
<feature type="sequence variant">
    <original>R</original>
    <variation>K</variation>
    <location>
        <position position="91"/>
    </location>
</feature>
<feature type="sequence variant">
    <original>M</original>
    <variation>I</variation>
    <location>
        <position position="95"/>
    </location>
</feature>
<feature type="sequence variant">
    <original>M</original>
    <variation>V</variation>
    <location>
        <position position="95"/>
    </location>
</feature>
<proteinExistence type="evidence at protein level"/>
<evidence type="ECO:0000255" key="1">
    <source>
        <dbReference type="PROSITE-ProRule" id="PRU00465"/>
    </source>
</evidence>
<evidence type="ECO:0000305" key="2"/>
<protein>
    <recommendedName>
        <fullName>Ferredoxin, leaf L-A</fullName>
    </recommendedName>
</protein>
<dbReference type="PIR" id="JX0082">
    <property type="entry name" value="JX0082"/>
</dbReference>
<dbReference type="SMR" id="P14938"/>
<dbReference type="Proteomes" id="UP000504610">
    <property type="component" value="Unplaced"/>
</dbReference>
<dbReference type="GO" id="GO:0009570">
    <property type="term" value="C:chloroplast stroma"/>
    <property type="evidence" value="ECO:0007669"/>
    <property type="project" value="TreeGrafter"/>
</dbReference>
<dbReference type="GO" id="GO:0051537">
    <property type="term" value="F:2 iron, 2 sulfur cluster binding"/>
    <property type="evidence" value="ECO:0007669"/>
    <property type="project" value="UniProtKB-KW"/>
</dbReference>
<dbReference type="GO" id="GO:0009055">
    <property type="term" value="F:electron transfer activity"/>
    <property type="evidence" value="ECO:0007669"/>
    <property type="project" value="InterPro"/>
</dbReference>
<dbReference type="GO" id="GO:0046872">
    <property type="term" value="F:metal ion binding"/>
    <property type="evidence" value="ECO:0007669"/>
    <property type="project" value="UniProtKB-KW"/>
</dbReference>
<dbReference type="GO" id="GO:0022900">
    <property type="term" value="P:electron transport chain"/>
    <property type="evidence" value="ECO:0007669"/>
    <property type="project" value="InterPro"/>
</dbReference>
<dbReference type="CDD" id="cd00207">
    <property type="entry name" value="fer2"/>
    <property type="match status" value="1"/>
</dbReference>
<dbReference type="FunFam" id="3.10.20.30:FF:000014">
    <property type="entry name" value="Ferredoxin"/>
    <property type="match status" value="1"/>
</dbReference>
<dbReference type="Gene3D" id="3.10.20.30">
    <property type="match status" value="1"/>
</dbReference>
<dbReference type="InterPro" id="IPR036010">
    <property type="entry name" value="2Fe-2S_ferredoxin-like_sf"/>
</dbReference>
<dbReference type="InterPro" id="IPR001041">
    <property type="entry name" value="2Fe-2S_ferredoxin-type"/>
</dbReference>
<dbReference type="InterPro" id="IPR006058">
    <property type="entry name" value="2Fe2S_fd_BS"/>
</dbReference>
<dbReference type="InterPro" id="IPR012675">
    <property type="entry name" value="Beta-grasp_dom_sf"/>
</dbReference>
<dbReference type="InterPro" id="IPR010241">
    <property type="entry name" value="Fd_pln"/>
</dbReference>
<dbReference type="NCBIfam" id="TIGR02008">
    <property type="entry name" value="fdx_plant"/>
    <property type="match status" value="1"/>
</dbReference>
<dbReference type="PANTHER" id="PTHR43112">
    <property type="entry name" value="FERREDOXIN"/>
    <property type="match status" value="1"/>
</dbReference>
<dbReference type="PANTHER" id="PTHR43112:SF3">
    <property type="entry name" value="FERREDOXIN-2, CHLOROPLASTIC"/>
    <property type="match status" value="1"/>
</dbReference>
<dbReference type="Pfam" id="PF00111">
    <property type="entry name" value="Fer2"/>
    <property type="match status" value="1"/>
</dbReference>
<dbReference type="SUPFAM" id="SSF54292">
    <property type="entry name" value="2Fe-2S ferredoxin-like"/>
    <property type="match status" value="1"/>
</dbReference>
<dbReference type="PROSITE" id="PS00197">
    <property type="entry name" value="2FE2S_FER_1"/>
    <property type="match status" value="1"/>
</dbReference>
<dbReference type="PROSITE" id="PS51085">
    <property type="entry name" value="2FE2S_FER_2"/>
    <property type="match status" value="1"/>
</dbReference>
<sequence>ATYKVKFITPEGEQEVECDDDVYVLDAAEEAGIDLPYSCRAGSCSSCAGKVVSGSVDQSDQSFLDDDQIAEGFVLTCAAYPTSDVTIETHREEDMV</sequence>
<accession>P14938</accession>
<keyword id="KW-0001">2Fe-2S</keyword>
<keyword id="KW-0150">Chloroplast</keyword>
<keyword id="KW-0903">Direct protein sequencing</keyword>
<keyword id="KW-0249">Electron transport</keyword>
<keyword id="KW-0408">Iron</keyword>
<keyword id="KW-0411">Iron-sulfur</keyword>
<keyword id="KW-0479">Metal-binding</keyword>
<keyword id="KW-0934">Plastid</keyword>
<keyword id="KW-1185">Reference proteome</keyword>
<keyword id="KW-0813">Transport</keyword>
<organism>
    <name type="scientific">Raphanus sativus</name>
    <name type="common">Radish</name>
    <name type="synonym">Raphanus raphanistrum var. sativus</name>
    <dbReference type="NCBI Taxonomy" id="3726"/>
    <lineage>
        <taxon>Eukaryota</taxon>
        <taxon>Viridiplantae</taxon>
        <taxon>Streptophyta</taxon>
        <taxon>Embryophyta</taxon>
        <taxon>Tracheophyta</taxon>
        <taxon>Spermatophyta</taxon>
        <taxon>Magnoliopsida</taxon>
        <taxon>eudicotyledons</taxon>
        <taxon>Gunneridae</taxon>
        <taxon>Pentapetalae</taxon>
        <taxon>rosids</taxon>
        <taxon>malvids</taxon>
        <taxon>Brassicales</taxon>
        <taxon>Brassicaceae</taxon>
        <taxon>Brassiceae</taxon>
        <taxon>Raphanus</taxon>
    </lineage>
</organism>